<evidence type="ECO:0000255" key="1">
    <source>
        <dbReference type="HAMAP-Rule" id="MF_00360"/>
    </source>
</evidence>
<evidence type="ECO:0000256" key="2">
    <source>
        <dbReference type="SAM" id="MobiDB-lite"/>
    </source>
</evidence>
<evidence type="ECO:0000305" key="3"/>
<proteinExistence type="inferred from homology"/>
<comment type="function">
    <text evidence="1">Binds together with bS18 to 16S ribosomal RNA.</text>
</comment>
<comment type="similarity">
    <text evidence="1">Belongs to the bacterial ribosomal protein bS6 family.</text>
</comment>
<feature type="chain" id="PRO_1000120718" description="Small ribosomal subunit protein bS6">
    <location>
        <begin position="1"/>
        <end position="124"/>
    </location>
</feature>
<feature type="region of interest" description="Disordered" evidence="2">
    <location>
        <begin position="96"/>
        <end position="124"/>
    </location>
</feature>
<feature type="compositionally biased region" description="Low complexity" evidence="2">
    <location>
        <begin position="114"/>
        <end position="124"/>
    </location>
</feature>
<name>RS6_BURCJ</name>
<keyword id="KW-0687">Ribonucleoprotein</keyword>
<keyword id="KW-0689">Ribosomal protein</keyword>
<keyword id="KW-0694">RNA-binding</keyword>
<keyword id="KW-0699">rRNA-binding</keyword>
<protein>
    <recommendedName>
        <fullName evidence="1">Small ribosomal subunit protein bS6</fullName>
    </recommendedName>
    <alternativeName>
        <fullName evidence="3">30S ribosomal protein S6</fullName>
    </alternativeName>
</protein>
<organism>
    <name type="scientific">Burkholderia cenocepacia (strain ATCC BAA-245 / DSM 16553 / LMG 16656 / NCTC 13227 / J2315 / CF5610)</name>
    <name type="common">Burkholderia cepacia (strain J2315)</name>
    <dbReference type="NCBI Taxonomy" id="216591"/>
    <lineage>
        <taxon>Bacteria</taxon>
        <taxon>Pseudomonadati</taxon>
        <taxon>Pseudomonadota</taxon>
        <taxon>Betaproteobacteria</taxon>
        <taxon>Burkholderiales</taxon>
        <taxon>Burkholderiaceae</taxon>
        <taxon>Burkholderia</taxon>
        <taxon>Burkholderia cepacia complex</taxon>
    </lineage>
</organism>
<gene>
    <name evidence="1" type="primary">rpsF</name>
    <name type="ordered locus">BceJ2315_19090</name>
    <name type="ORF">BCAL1945</name>
</gene>
<dbReference type="EMBL" id="AM747720">
    <property type="protein sequence ID" value="CAR52246.1"/>
    <property type="molecule type" value="Genomic_DNA"/>
</dbReference>
<dbReference type="RefSeq" id="WP_006486255.1">
    <property type="nucleotide sequence ID" value="NC_011000.1"/>
</dbReference>
<dbReference type="SMR" id="B4EBH3"/>
<dbReference type="GeneID" id="83048670"/>
<dbReference type="KEGG" id="bcj:BCAL1945"/>
<dbReference type="eggNOG" id="COG0360">
    <property type="taxonomic scope" value="Bacteria"/>
</dbReference>
<dbReference type="HOGENOM" id="CLU_113441_6_1_4"/>
<dbReference type="BioCyc" id="BCEN216591:G1G1V-2139-MONOMER"/>
<dbReference type="Proteomes" id="UP000001035">
    <property type="component" value="Chromosome 1"/>
</dbReference>
<dbReference type="GO" id="GO:0022627">
    <property type="term" value="C:cytosolic small ribosomal subunit"/>
    <property type="evidence" value="ECO:0007669"/>
    <property type="project" value="TreeGrafter"/>
</dbReference>
<dbReference type="GO" id="GO:0070181">
    <property type="term" value="F:small ribosomal subunit rRNA binding"/>
    <property type="evidence" value="ECO:0007669"/>
    <property type="project" value="TreeGrafter"/>
</dbReference>
<dbReference type="GO" id="GO:0003735">
    <property type="term" value="F:structural constituent of ribosome"/>
    <property type="evidence" value="ECO:0007669"/>
    <property type="project" value="InterPro"/>
</dbReference>
<dbReference type="GO" id="GO:0006412">
    <property type="term" value="P:translation"/>
    <property type="evidence" value="ECO:0007669"/>
    <property type="project" value="UniProtKB-UniRule"/>
</dbReference>
<dbReference type="CDD" id="cd00473">
    <property type="entry name" value="bS6"/>
    <property type="match status" value="1"/>
</dbReference>
<dbReference type="Gene3D" id="3.30.70.60">
    <property type="match status" value="1"/>
</dbReference>
<dbReference type="HAMAP" id="MF_00360">
    <property type="entry name" value="Ribosomal_bS6"/>
    <property type="match status" value="1"/>
</dbReference>
<dbReference type="InterPro" id="IPR000529">
    <property type="entry name" value="Ribosomal_bS6"/>
</dbReference>
<dbReference type="InterPro" id="IPR035980">
    <property type="entry name" value="Ribosomal_bS6_sf"/>
</dbReference>
<dbReference type="InterPro" id="IPR020814">
    <property type="entry name" value="Ribosomal_S6_plastid/chlpt"/>
</dbReference>
<dbReference type="InterPro" id="IPR014717">
    <property type="entry name" value="Transl_elong_EF1B/ribsomal_bS6"/>
</dbReference>
<dbReference type="NCBIfam" id="TIGR00166">
    <property type="entry name" value="S6"/>
    <property type="match status" value="1"/>
</dbReference>
<dbReference type="PANTHER" id="PTHR21011">
    <property type="entry name" value="MITOCHONDRIAL 28S RIBOSOMAL PROTEIN S6"/>
    <property type="match status" value="1"/>
</dbReference>
<dbReference type="PANTHER" id="PTHR21011:SF1">
    <property type="entry name" value="SMALL RIBOSOMAL SUBUNIT PROTEIN BS6M"/>
    <property type="match status" value="1"/>
</dbReference>
<dbReference type="Pfam" id="PF01250">
    <property type="entry name" value="Ribosomal_S6"/>
    <property type="match status" value="1"/>
</dbReference>
<dbReference type="SUPFAM" id="SSF54995">
    <property type="entry name" value="Ribosomal protein S6"/>
    <property type="match status" value="1"/>
</dbReference>
<sequence>MRHYEIVFIVHPDQSEQVPAMIERYKSTITSHGGQIHRVEDWGRRQLAYMIEKLAKAHYVCMNIECDQTTLDELEHAFKFNDAVLRHLIVKMKKAETGPSPMMKEVQREEAKKAAAAQPAEAQA</sequence>
<reference key="1">
    <citation type="journal article" date="2009" name="J. Bacteriol.">
        <title>The genome of Burkholderia cenocepacia J2315, an epidemic pathogen of cystic fibrosis patients.</title>
        <authorList>
            <person name="Holden M.T."/>
            <person name="Seth-Smith H.M."/>
            <person name="Crossman L.C."/>
            <person name="Sebaihia M."/>
            <person name="Bentley S.D."/>
            <person name="Cerdeno-Tarraga A.M."/>
            <person name="Thomson N.R."/>
            <person name="Bason N."/>
            <person name="Quail M.A."/>
            <person name="Sharp S."/>
            <person name="Cherevach I."/>
            <person name="Churcher C."/>
            <person name="Goodhead I."/>
            <person name="Hauser H."/>
            <person name="Holroyd N."/>
            <person name="Mungall K."/>
            <person name="Scott P."/>
            <person name="Walker D."/>
            <person name="White B."/>
            <person name="Rose H."/>
            <person name="Iversen P."/>
            <person name="Mil-Homens D."/>
            <person name="Rocha E.P."/>
            <person name="Fialho A.M."/>
            <person name="Baldwin A."/>
            <person name="Dowson C."/>
            <person name="Barrell B.G."/>
            <person name="Govan J.R."/>
            <person name="Vandamme P."/>
            <person name="Hart C.A."/>
            <person name="Mahenthiralingam E."/>
            <person name="Parkhill J."/>
        </authorList>
    </citation>
    <scope>NUCLEOTIDE SEQUENCE [LARGE SCALE GENOMIC DNA]</scope>
    <source>
        <strain>ATCC BAA-245 / DSM 16553 / LMG 16656 / NCTC 13227 / J2315 / CF5610</strain>
    </source>
</reference>
<accession>B4EBH3</accession>